<proteinExistence type="evidence at transcript level"/>
<organism>
    <name type="scientific">Pongo abelii</name>
    <name type="common">Sumatran orangutan</name>
    <name type="synonym">Pongo pygmaeus abelii</name>
    <dbReference type="NCBI Taxonomy" id="9601"/>
    <lineage>
        <taxon>Eukaryota</taxon>
        <taxon>Metazoa</taxon>
        <taxon>Chordata</taxon>
        <taxon>Craniata</taxon>
        <taxon>Vertebrata</taxon>
        <taxon>Euteleostomi</taxon>
        <taxon>Mammalia</taxon>
        <taxon>Eutheria</taxon>
        <taxon>Euarchontoglires</taxon>
        <taxon>Primates</taxon>
        <taxon>Haplorrhini</taxon>
        <taxon>Catarrhini</taxon>
        <taxon>Hominidae</taxon>
        <taxon>Pongo</taxon>
    </lineage>
</organism>
<comment type="function">
    <text evidence="3">Component of the FTS/Hook/FHIP complex (FHF complex). The FHF complex may function to promote vesicle trafficking and/or fusion via the homotypic vesicular protein sorting complex (the HOPS complex). FHF complex promotes the distribution of AP-4 complex to the perinuclear area of the cell.</text>
</comment>
<comment type="subunit">
    <text evidence="3">Component of the FTS/Hook/FHIP complex (FHF complex), composed of AKTIP/FTS, FHIP1B, and one or more members of the Hook family of proteins HOOK1, HOOK2, and HOOK3. The FHF complex associates with the homotypic vesicular sorting complex (the HOPS complex).</text>
</comment>
<comment type="similarity">
    <text evidence="5">Belongs to the FHIP family.</text>
</comment>
<comment type="sequence caution" evidence="5">
    <conflict type="frameshift">
        <sequence resource="EMBL-CDS" id="CAH89689"/>
    </conflict>
</comment>
<reference key="1">
    <citation type="submission" date="2004-11" db="EMBL/GenBank/DDBJ databases">
        <authorList>
            <consortium name="The German cDNA consortium"/>
        </authorList>
    </citation>
    <scope>NUCLEOTIDE SEQUENCE [LARGE SCALE MRNA]</scope>
    <source>
        <tissue>Kidney</tissue>
    </source>
</reference>
<keyword id="KW-0597">Phosphoprotein</keyword>
<keyword id="KW-0653">Protein transport</keyword>
<keyword id="KW-1185">Reference proteome</keyword>
<keyword id="KW-0813">Transport</keyword>
<gene>
    <name type="primary">FHIP1B</name>
    <name type="synonym">FAM160A2</name>
</gene>
<accession>Q5R8V2</accession>
<accession>Q5REW8</accession>
<dbReference type="EMBL" id="CR857397">
    <property type="protein sequence ID" value="CAH89689.1"/>
    <property type="status" value="ALT_FRAME"/>
    <property type="molecule type" value="mRNA"/>
</dbReference>
<dbReference type="EMBL" id="CR859647">
    <property type="protein sequence ID" value="CAH91808.1"/>
    <property type="molecule type" value="mRNA"/>
</dbReference>
<dbReference type="RefSeq" id="NP_001126049.1">
    <property type="nucleotide sequence ID" value="NM_001132577.1"/>
</dbReference>
<dbReference type="RefSeq" id="NP_001128746.1">
    <property type="nucleotide sequence ID" value="NM_001135274.1"/>
</dbReference>
<dbReference type="SMR" id="Q5R8V2"/>
<dbReference type="FunCoup" id="Q5R8V2">
    <property type="interactions" value="590"/>
</dbReference>
<dbReference type="STRING" id="9601.ENSPPYP00000004071"/>
<dbReference type="GeneID" id="100172999"/>
<dbReference type="KEGG" id="pon:100172999"/>
<dbReference type="CTD" id="84067"/>
<dbReference type="eggNOG" id="KOG3695">
    <property type="taxonomic scope" value="Eukaryota"/>
</dbReference>
<dbReference type="InParanoid" id="Q5R8V2"/>
<dbReference type="OrthoDB" id="6287422at2759"/>
<dbReference type="Proteomes" id="UP000001595">
    <property type="component" value="Unplaced"/>
</dbReference>
<dbReference type="GO" id="GO:0070695">
    <property type="term" value="C:FHF complex"/>
    <property type="evidence" value="ECO:0000250"/>
    <property type="project" value="UniProtKB"/>
</dbReference>
<dbReference type="GO" id="GO:0045022">
    <property type="term" value="P:early endosome to late endosome transport"/>
    <property type="evidence" value="ECO:0000250"/>
    <property type="project" value="UniProtKB"/>
</dbReference>
<dbReference type="GO" id="GO:0007032">
    <property type="term" value="P:endosome organization"/>
    <property type="evidence" value="ECO:0000250"/>
    <property type="project" value="UniProtKB"/>
</dbReference>
<dbReference type="GO" id="GO:0008333">
    <property type="term" value="P:endosome to lysosome transport"/>
    <property type="evidence" value="ECO:0000250"/>
    <property type="project" value="UniProtKB"/>
</dbReference>
<dbReference type="GO" id="GO:0007040">
    <property type="term" value="P:lysosome organization"/>
    <property type="evidence" value="ECO:0000250"/>
    <property type="project" value="UniProtKB"/>
</dbReference>
<dbReference type="GO" id="GO:1905719">
    <property type="term" value="P:protein localization to perinuclear region of cytoplasm"/>
    <property type="evidence" value="ECO:0000250"/>
    <property type="project" value="UniProtKB"/>
</dbReference>
<dbReference type="GO" id="GO:0015031">
    <property type="term" value="P:protein transport"/>
    <property type="evidence" value="ECO:0007669"/>
    <property type="project" value="UniProtKB-KW"/>
</dbReference>
<dbReference type="InterPro" id="IPR019384">
    <property type="entry name" value="FHIP"/>
</dbReference>
<dbReference type="InterPro" id="IPR045669">
    <property type="entry name" value="FHIP_C"/>
</dbReference>
<dbReference type="InterPro" id="IPR045668">
    <property type="entry name" value="FHIP_KELAA_motif"/>
</dbReference>
<dbReference type="PANTHER" id="PTHR21705:SF4">
    <property type="entry name" value="FHF COMPLEX SUBUNIT HOOK-INTERACTING PROTEIN 1B"/>
    <property type="match status" value="1"/>
</dbReference>
<dbReference type="PANTHER" id="PTHR21705">
    <property type="entry name" value="RAI16 PROTEIN-RELATED"/>
    <property type="match status" value="1"/>
</dbReference>
<dbReference type="Pfam" id="PF19314">
    <property type="entry name" value="DUF5917"/>
    <property type="match status" value="1"/>
</dbReference>
<dbReference type="Pfam" id="PF19311">
    <property type="entry name" value="KELAA"/>
    <property type="match status" value="1"/>
</dbReference>
<dbReference type="Pfam" id="PF10257">
    <property type="entry name" value="RAI16-like"/>
    <property type="match status" value="1"/>
</dbReference>
<feature type="chain" id="PRO_0000253861" description="FHF complex subunit HOOK-interacting protein 1B">
    <location>
        <begin position="1"/>
        <end position="972"/>
    </location>
</feature>
<feature type="region of interest" description="Disordered" evidence="4">
    <location>
        <begin position="465"/>
        <end position="496"/>
    </location>
</feature>
<feature type="region of interest" description="Disordered" evidence="4">
    <location>
        <begin position="510"/>
        <end position="547"/>
    </location>
</feature>
<feature type="region of interest" description="Disordered" evidence="4">
    <location>
        <begin position="573"/>
        <end position="642"/>
    </location>
</feature>
<feature type="region of interest" description="Disordered" evidence="4">
    <location>
        <begin position="710"/>
        <end position="733"/>
    </location>
</feature>
<feature type="compositionally biased region" description="Low complexity" evidence="4">
    <location>
        <begin position="479"/>
        <end position="490"/>
    </location>
</feature>
<feature type="compositionally biased region" description="Low complexity" evidence="4">
    <location>
        <begin position="523"/>
        <end position="535"/>
    </location>
</feature>
<feature type="compositionally biased region" description="Gly residues" evidence="4">
    <location>
        <begin position="618"/>
        <end position="627"/>
    </location>
</feature>
<feature type="modified residue" description="Phosphoserine" evidence="3">
    <location>
        <position position="467"/>
    </location>
</feature>
<feature type="modified residue" description="Phosphoserine" evidence="1">
    <location>
        <position position="510"/>
    </location>
</feature>
<feature type="modified residue" description="Phosphoserine" evidence="1">
    <location>
        <position position="523"/>
    </location>
</feature>
<feature type="modified residue" description="Phosphoserine" evidence="2">
    <location>
        <position position="529"/>
    </location>
</feature>
<feature type="modified residue" description="Phosphoserine" evidence="2">
    <location>
        <position position="533"/>
    </location>
</feature>
<feature type="modified residue" description="Phosphoserine" evidence="3">
    <location>
        <position position="859"/>
    </location>
</feature>
<feature type="modified residue" description="Phosphoserine" evidence="3">
    <location>
        <position position="897"/>
    </location>
</feature>
<feature type="sequence conflict" description="In Ref. 1; CAH89689." evidence="5" ref="1">
    <original>AR</original>
    <variation>VN</variation>
    <location>
        <begin position="477"/>
        <end position="478"/>
    </location>
</feature>
<feature type="sequence conflict" description="In Ref. 1; CAH89689." evidence="5" ref="1">
    <original>S</original>
    <variation>G</variation>
    <location>
        <position position="512"/>
    </location>
</feature>
<feature type="sequence conflict" description="In Ref. 1; CAH89689." evidence="5" ref="1">
    <original>Q</original>
    <variation>L</variation>
    <location>
        <position position="555"/>
    </location>
</feature>
<feature type="sequence conflict" description="In Ref. 1; CAH89689." evidence="5" ref="1">
    <original>H</original>
    <variation>R</variation>
    <location>
        <position position="564"/>
    </location>
</feature>
<feature type="sequence conflict" description="In Ref. 1; CAH89689." evidence="5" ref="1">
    <original>R</original>
    <variation>K</variation>
    <location>
        <position position="648"/>
    </location>
</feature>
<feature type="sequence conflict" description="In Ref. 1; CAH89689." evidence="5" ref="1">
    <original>V</original>
    <variation>A</variation>
    <location>
        <position position="657"/>
    </location>
</feature>
<feature type="sequence conflict" description="In Ref. 1; CAH89689." evidence="5" ref="1">
    <original>N</original>
    <variation>S</variation>
    <location>
        <position position="723"/>
    </location>
</feature>
<feature type="sequence conflict" description="In Ref. 1; CAH89689." evidence="5" ref="1">
    <original>P</original>
    <variation>L</variation>
    <location>
        <position position="729"/>
    </location>
</feature>
<feature type="sequence conflict" description="In Ref. 1; CAH89689." evidence="5" ref="1">
    <original>R</original>
    <variation>H</variation>
    <location>
        <position position="869"/>
    </location>
</feature>
<evidence type="ECO:0000250" key="1">
    <source>
        <dbReference type="UniProtKB" id="Q3U2I3"/>
    </source>
</evidence>
<evidence type="ECO:0000250" key="2">
    <source>
        <dbReference type="UniProtKB" id="Q66H54"/>
    </source>
</evidence>
<evidence type="ECO:0000250" key="3">
    <source>
        <dbReference type="UniProtKB" id="Q8N612"/>
    </source>
</evidence>
<evidence type="ECO:0000256" key="4">
    <source>
        <dbReference type="SAM" id="MobiDB-lite"/>
    </source>
</evidence>
<evidence type="ECO:0000305" key="5"/>
<name>FHI1B_PONAB</name>
<protein>
    <recommendedName>
        <fullName>FHF complex subunit HOOK-interacting protein 1B</fullName>
        <shortName>FHIP1B</shortName>
    </recommendedName>
    <alternativeName>
        <fullName>FTS- and Hook-interacting protein</fullName>
        <shortName>FHIP</shortName>
    </alternativeName>
</protein>
<sequence>MERMNWLSRLASRGPGHRIPQGANLQTPVMADPETCLMVFKNHWSQVVRILERQGPRAAPGGADDLSAVRNHTYQMLTLLAEDRAVPSAPTGPGPLLEFAPHEDLLTRVLTWQLQWGELGDGVEERRAEQLKLFEMLVSEARQPLLQHGPVREALLTLLDACGRPVPSSPALDEGLVLLLSQLCVCVAQEPSLLEFFLQPPPEPGAAPRLLLFSRLVPFVHREGTLGQQARDALPLLMALSAGSPTVGRYIADHSYFCPVLATGLSALYSSLPRRIEVPGDDWHCLRREDWLGVPALALFMSSLEFCNAVIQVAHPLVQKQLVDYIHNGFLVPVMGPALHKTSVEEMIASTAYLELFLRSISEPALLRTFLRFLLLHRHDTHTILDTLVARIGSNSRLCMVSLSLFRTLLNLSCEDVLLQLVLRYLVPCNHVMLSQKPAVRDVDLYGRAADKFLSLIPRCCRHHAPSPPRPEHASWARGPGSPSVDSSSVMTVPRPSTPSRLALFLRQQSLSGSESPGPAPCSPGLSASPASSPGRRPTPAEEAGELEDNYLEYQREARRGVDHCVRACRTWSAPYDGERPSPEPSPFGSRTKKRSLLPEEDRNNVGEGEEEELGSRGLAGGAGEGPGHLPPPQLNGVPGSWPEGAKRVRLVPKEGVGELLEGISEGMAGLEGFGQELRELEVALSNGGTGSESPLEPPLPLEEEEAYESFTCPPEPPGPFLNSPLRTPNQLPSQPFTGPFMAVLFAKLENMLQNSVYVNFLLTGLVAQLACHPQPLLRSFLLNTNMVFQPSVKSLLQVLGSVKNKIENFAASQEDFPALLSKAKKYLIARGKLDWAEGPAAGPAPRRSDPLVKSRRPSLGELLLRHARSPTRARQAAQLVLQPGRDGAGLGLSGGSPGASTPVLPTRGGAPERQGEALRVKNAVYCAVIFPEFLKELAAISQAHAVTSPFLLETSEEGSGPLISGCGPLNP</sequence>